<reference key="1">
    <citation type="submission" date="1999-05" db="EMBL/GenBank/DDBJ databases">
        <title>Molecular cloning of chalcone synthase genes from sorghum.</title>
        <authorList>
            <person name="Lo S.-C.C."/>
            <person name="Nicholson R.L."/>
        </authorList>
    </citation>
    <scope>NUCLEOTIDE SEQUENCE [GENOMIC DNA]</scope>
</reference>
<name>CHS1_SORBI</name>
<organism>
    <name type="scientific">Sorghum bicolor</name>
    <name type="common">Sorghum</name>
    <name type="synonym">Sorghum vulgare</name>
    <dbReference type="NCBI Taxonomy" id="4558"/>
    <lineage>
        <taxon>Eukaryota</taxon>
        <taxon>Viridiplantae</taxon>
        <taxon>Streptophyta</taxon>
        <taxon>Embryophyta</taxon>
        <taxon>Tracheophyta</taxon>
        <taxon>Spermatophyta</taxon>
        <taxon>Magnoliopsida</taxon>
        <taxon>Liliopsida</taxon>
        <taxon>Poales</taxon>
        <taxon>Poaceae</taxon>
        <taxon>PACMAD clade</taxon>
        <taxon>Panicoideae</taxon>
        <taxon>Andropogonodae</taxon>
        <taxon>Andropogoneae</taxon>
        <taxon>Sorghinae</taxon>
        <taxon>Sorghum</taxon>
    </lineage>
</organism>
<gene>
    <name type="primary">CHS1</name>
</gene>
<accession>Q9XGX2</accession>
<evidence type="ECO:0000255" key="1">
    <source>
        <dbReference type="PROSITE-ProRule" id="PRU10023"/>
    </source>
</evidence>
<evidence type="ECO:0000305" key="2"/>
<proteinExistence type="inferred from homology"/>
<keyword id="KW-0012">Acyltransferase</keyword>
<keyword id="KW-0284">Flavonoid biosynthesis</keyword>
<keyword id="KW-0808">Transferase</keyword>
<sequence length="401" mass="43745">MAGATVTVEEVRKAQRATGPATVLAIGTATPANCVHQADYPDYYFRITKSEHMTELKEKFKRMCDKSQIRKRYMHLTEEYLAENPNMCAYMAPSLDARQDIVVVEVPKLGKAAAQKAIKEWGQPKSKITHLVFCTTSGVDMPGADYQLTKMLGLRPSVNRLMMYQQGCFAGGTVLRVAKDLAENNRGARVLVVCSEITAVTFRGPSESHLDSMVGQALFGDGAAAVIVGADPDERVERPLFQLVSASQRILPDSEGAIDGHLREVGLTFHLLKDVPGLISKNIERALEEAFKPLGITDYNSIFWVAHPGGPAILDQVEAKVGLEKERMRATRHVLSEYGNMSSACVLFILDEMRKRSAEDGQTTTGEGFDWGVLFGFGPGLTVETVVLHSVPITTGAAITA</sequence>
<dbReference type="EC" id="2.3.1.74"/>
<dbReference type="EMBL" id="AF152548">
    <property type="protein sequence ID" value="AAD41873.1"/>
    <property type="molecule type" value="Genomic_DNA"/>
</dbReference>
<dbReference type="RefSeq" id="XP_002450874.1">
    <property type="nucleotide sequence ID" value="XM_002450829.1"/>
</dbReference>
<dbReference type="SMR" id="Q9XGX2"/>
<dbReference type="EnsemblPlants" id="EES09862">
    <property type="protein sequence ID" value="EES09862"/>
    <property type="gene ID" value="SORBI_3005G137000"/>
</dbReference>
<dbReference type="GeneID" id="8064817"/>
<dbReference type="Gramene" id="EES09862">
    <property type="protein sequence ID" value="EES09862"/>
    <property type="gene ID" value="SORBI_3005G137000"/>
</dbReference>
<dbReference type="KEGG" id="sbi:8064817"/>
<dbReference type="eggNOG" id="ENOG502QRSY">
    <property type="taxonomic scope" value="Eukaryota"/>
</dbReference>
<dbReference type="HOGENOM" id="CLU_034992_2_0_1"/>
<dbReference type="OMA" id="RGPCETH"/>
<dbReference type="OrthoDB" id="1529441at2759"/>
<dbReference type="UniPathway" id="UPA00154"/>
<dbReference type="ExpressionAtlas" id="Q9XGX2">
    <property type="expression patterns" value="baseline and differential"/>
</dbReference>
<dbReference type="GO" id="GO:0016210">
    <property type="term" value="F:naringenin-chalcone synthase activity"/>
    <property type="evidence" value="ECO:0007669"/>
    <property type="project" value="UniProtKB-EC"/>
</dbReference>
<dbReference type="GO" id="GO:0009813">
    <property type="term" value="P:flavonoid biosynthetic process"/>
    <property type="evidence" value="ECO:0007669"/>
    <property type="project" value="UniProtKB-UniPathway"/>
</dbReference>
<dbReference type="CDD" id="cd00831">
    <property type="entry name" value="CHS_like"/>
    <property type="match status" value="1"/>
</dbReference>
<dbReference type="FunFam" id="3.40.47.10:FF:000014">
    <property type="entry name" value="Chalcone synthase 1"/>
    <property type="match status" value="1"/>
</dbReference>
<dbReference type="FunFam" id="3.40.47.10:FF:000025">
    <property type="entry name" value="Chalcone synthase 2"/>
    <property type="match status" value="1"/>
</dbReference>
<dbReference type="Gene3D" id="3.40.47.10">
    <property type="match status" value="2"/>
</dbReference>
<dbReference type="InterPro" id="IPR012328">
    <property type="entry name" value="Chalcone/stilbene_synt_C"/>
</dbReference>
<dbReference type="InterPro" id="IPR001099">
    <property type="entry name" value="Chalcone/stilbene_synt_N"/>
</dbReference>
<dbReference type="InterPro" id="IPR018088">
    <property type="entry name" value="Chalcone/stilbene_synthase_AS"/>
</dbReference>
<dbReference type="InterPro" id="IPR011141">
    <property type="entry name" value="Polyketide_synthase_type-III"/>
</dbReference>
<dbReference type="InterPro" id="IPR016039">
    <property type="entry name" value="Thiolase-like"/>
</dbReference>
<dbReference type="PANTHER" id="PTHR11877:SF14">
    <property type="entry name" value="CHALCONE SYNTHASE"/>
    <property type="match status" value="1"/>
</dbReference>
<dbReference type="PANTHER" id="PTHR11877">
    <property type="entry name" value="HYDROXYMETHYLGLUTARYL-COA SYNTHASE"/>
    <property type="match status" value="1"/>
</dbReference>
<dbReference type="Pfam" id="PF02797">
    <property type="entry name" value="Chal_sti_synt_C"/>
    <property type="match status" value="1"/>
</dbReference>
<dbReference type="Pfam" id="PF00195">
    <property type="entry name" value="Chal_sti_synt_N"/>
    <property type="match status" value="1"/>
</dbReference>
<dbReference type="PIRSF" id="PIRSF000451">
    <property type="entry name" value="PKS_III"/>
    <property type="match status" value="1"/>
</dbReference>
<dbReference type="SUPFAM" id="SSF53901">
    <property type="entry name" value="Thiolase-like"/>
    <property type="match status" value="2"/>
</dbReference>
<dbReference type="PROSITE" id="PS00441">
    <property type="entry name" value="CHALCONE_SYNTH"/>
    <property type="match status" value="1"/>
</dbReference>
<protein>
    <recommendedName>
        <fullName>Chalcone synthase 1</fullName>
        <ecNumber>2.3.1.74</ecNumber>
    </recommendedName>
    <alternativeName>
        <fullName>Naringenin-chalcone synthase 1</fullName>
    </alternativeName>
</protein>
<comment type="function">
    <text>The primary product of this enzyme is 4,2',4',6'-tetrahydroxychalcone (also termed naringenin-chalcone or chalcone) which can under specific conditions spontaneously isomerize into naringenin.</text>
</comment>
<comment type="catalytic activity">
    <reaction evidence="1">
        <text>(E)-4-coumaroyl-CoA + 3 malonyl-CoA + 3 H(+) = 2',4,4',6'-tetrahydroxychalcone + 3 CO2 + 4 CoA</text>
        <dbReference type="Rhea" id="RHEA:11128"/>
        <dbReference type="ChEBI" id="CHEBI:15378"/>
        <dbReference type="ChEBI" id="CHEBI:15413"/>
        <dbReference type="ChEBI" id="CHEBI:16526"/>
        <dbReference type="ChEBI" id="CHEBI:57287"/>
        <dbReference type="ChEBI" id="CHEBI:57384"/>
        <dbReference type="ChEBI" id="CHEBI:85008"/>
        <dbReference type="EC" id="2.3.1.74"/>
    </reaction>
</comment>
<comment type="pathway">
    <text>Secondary metabolite biosynthesis; flavonoid biosynthesis.</text>
</comment>
<comment type="similarity">
    <text evidence="2">Belongs to the thiolase-like superfamily. Chalcone/stilbene synthases family.</text>
</comment>
<feature type="chain" id="PRO_0000216055" description="Chalcone synthase 1">
    <location>
        <begin position="1"/>
        <end position="401"/>
    </location>
</feature>
<feature type="active site" evidence="1">
    <location>
        <position position="168"/>
    </location>
</feature>